<accession>B0TTT0</accession>
<gene>
    <name type="ordered locus">Shal_2089</name>
</gene>
<feature type="chain" id="PRO_0000387739" description="Acetaldehyde dehydrogenase">
    <location>
        <begin position="1"/>
        <end position="307"/>
    </location>
</feature>
<feature type="active site" description="Acyl-thioester intermediate" evidence="1">
    <location>
        <position position="130"/>
    </location>
</feature>
<feature type="binding site" evidence="1">
    <location>
        <begin position="12"/>
        <end position="15"/>
    </location>
    <ligand>
        <name>NAD(+)</name>
        <dbReference type="ChEBI" id="CHEBI:57540"/>
    </ligand>
</feature>
<feature type="binding site" evidence="1">
    <location>
        <begin position="161"/>
        <end position="169"/>
    </location>
    <ligand>
        <name>NAD(+)</name>
        <dbReference type="ChEBI" id="CHEBI:57540"/>
    </ligand>
</feature>
<feature type="binding site" evidence="1">
    <location>
        <position position="272"/>
    </location>
    <ligand>
        <name>NAD(+)</name>
        <dbReference type="ChEBI" id="CHEBI:57540"/>
    </ligand>
</feature>
<evidence type="ECO:0000255" key="1">
    <source>
        <dbReference type="HAMAP-Rule" id="MF_01657"/>
    </source>
</evidence>
<sequence>MTSKIKCALIGSGNIGTDLLYKLMRSDVLEPVWMVGIDPESDGLARAKAAGLKVTADGINGLLPFVEADEIKIAFDATSAYVHAENSRKLNELGVVMIDLTPAAIGPFCVPPVNLSQLDENVKNINMVTCGGQATIPMVAAVSRVQAVEYGEIVATVSSRSVGPGTRQNIDEFTRTTAGAVEQIGGAEKGKAIIVINPAEPPLLMRDTIHCLTKEQPDEQAITASVHEMIEQVQQYVPGYTLKNGPVFDGRKVTIFLEVEGLGDYLPKYAGNLDIMTAAAARTAEMLASKMLNPEPHYNVTQEAALA</sequence>
<reference key="1">
    <citation type="submission" date="2008-01" db="EMBL/GenBank/DDBJ databases">
        <title>Complete sequence of Shewanella halifaxensis HAW-EB4.</title>
        <authorList>
            <consortium name="US DOE Joint Genome Institute"/>
            <person name="Copeland A."/>
            <person name="Lucas S."/>
            <person name="Lapidus A."/>
            <person name="Glavina del Rio T."/>
            <person name="Dalin E."/>
            <person name="Tice H."/>
            <person name="Bruce D."/>
            <person name="Goodwin L."/>
            <person name="Pitluck S."/>
            <person name="Sims D."/>
            <person name="Brettin T."/>
            <person name="Detter J.C."/>
            <person name="Han C."/>
            <person name="Kuske C.R."/>
            <person name="Schmutz J."/>
            <person name="Larimer F."/>
            <person name="Land M."/>
            <person name="Hauser L."/>
            <person name="Kyrpides N."/>
            <person name="Kim E."/>
            <person name="Zhao J.-S."/>
            <person name="Richardson P."/>
        </authorList>
    </citation>
    <scope>NUCLEOTIDE SEQUENCE [LARGE SCALE GENOMIC DNA]</scope>
    <source>
        <strain>HAW-EB4</strain>
    </source>
</reference>
<protein>
    <recommendedName>
        <fullName evidence="1">Acetaldehyde dehydrogenase</fullName>
        <ecNumber evidence="1">1.2.1.10</ecNumber>
    </recommendedName>
    <alternativeName>
        <fullName evidence="1">Acetaldehyde dehydrogenase [acetylating]</fullName>
    </alternativeName>
</protein>
<organism>
    <name type="scientific">Shewanella halifaxensis (strain HAW-EB4)</name>
    <dbReference type="NCBI Taxonomy" id="458817"/>
    <lineage>
        <taxon>Bacteria</taxon>
        <taxon>Pseudomonadati</taxon>
        <taxon>Pseudomonadota</taxon>
        <taxon>Gammaproteobacteria</taxon>
        <taxon>Alteromonadales</taxon>
        <taxon>Shewanellaceae</taxon>
        <taxon>Shewanella</taxon>
    </lineage>
</organism>
<keyword id="KW-0058">Aromatic hydrocarbons catabolism</keyword>
<keyword id="KW-0520">NAD</keyword>
<keyword id="KW-0560">Oxidoreductase</keyword>
<comment type="catalytic activity">
    <reaction evidence="1">
        <text>acetaldehyde + NAD(+) + CoA = acetyl-CoA + NADH + H(+)</text>
        <dbReference type="Rhea" id="RHEA:23288"/>
        <dbReference type="ChEBI" id="CHEBI:15343"/>
        <dbReference type="ChEBI" id="CHEBI:15378"/>
        <dbReference type="ChEBI" id="CHEBI:57287"/>
        <dbReference type="ChEBI" id="CHEBI:57288"/>
        <dbReference type="ChEBI" id="CHEBI:57540"/>
        <dbReference type="ChEBI" id="CHEBI:57945"/>
        <dbReference type="EC" id="1.2.1.10"/>
    </reaction>
</comment>
<comment type="similarity">
    <text evidence="1">Belongs to the acetaldehyde dehydrogenase family.</text>
</comment>
<name>ACDH_SHEHH</name>
<dbReference type="EC" id="1.2.1.10" evidence="1"/>
<dbReference type="EMBL" id="CP000931">
    <property type="protein sequence ID" value="ABZ76648.1"/>
    <property type="molecule type" value="Genomic_DNA"/>
</dbReference>
<dbReference type="RefSeq" id="WP_012277178.1">
    <property type="nucleotide sequence ID" value="NC_010334.1"/>
</dbReference>
<dbReference type="SMR" id="B0TTT0"/>
<dbReference type="STRING" id="458817.Shal_2089"/>
<dbReference type="KEGG" id="shl:Shal_2089"/>
<dbReference type="eggNOG" id="COG4569">
    <property type="taxonomic scope" value="Bacteria"/>
</dbReference>
<dbReference type="HOGENOM" id="CLU_062208_0_0_6"/>
<dbReference type="OrthoDB" id="9786743at2"/>
<dbReference type="Proteomes" id="UP000001317">
    <property type="component" value="Chromosome"/>
</dbReference>
<dbReference type="GO" id="GO:0008774">
    <property type="term" value="F:acetaldehyde dehydrogenase (acetylating) activity"/>
    <property type="evidence" value="ECO:0007669"/>
    <property type="project" value="UniProtKB-UniRule"/>
</dbReference>
<dbReference type="GO" id="GO:0051287">
    <property type="term" value="F:NAD binding"/>
    <property type="evidence" value="ECO:0007669"/>
    <property type="project" value="UniProtKB-UniRule"/>
</dbReference>
<dbReference type="GO" id="GO:0009056">
    <property type="term" value="P:catabolic process"/>
    <property type="evidence" value="ECO:0007669"/>
    <property type="project" value="UniProtKB-KW"/>
</dbReference>
<dbReference type="CDD" id="cd23933">
    <property type="entry name" value="ALDH_C"/>
    <property type="match status" value="1"/>
</dbReference>
<dbReference type="Gene3D" id="3.30.360.10">
    <property type="entry name" value="Dihydrodipicolinate Reductase, domain 2"/>
    <property type="match status" value="1"/>
</dbReference>
<dbReference type="Gene3D" id="3.40.50.720">
    <property type="entry name" value="NAD(P)-binding Rossmann-like Domain"/>
    <property type="match status" value="1"/>
</dbReference>
<dbReference type="HAMAP" id="MF_01657">
    <property type="entry name" value="Ac_ald_DH_ac"/>
    <property type="match status" value="1"/>
</dbReference>
<dbReference type="InterPro" id="IPR003361">
    <property type="entry name" value="Acetaldehyde_dehydrogenase"/>
</dbReference>
<dbReference type="InterPro" id="IPR015426">
    <property type="entry name" value="Acetylaldehyde_DH_C"/>
</dbReference>
<dbReference type="InterPro" id="IPR036291">
    <property type="entry name" value="NAD(P)-bd_dom_sf"/>
</dbReference>
<dbReference type="InterPro" id="IPR000534">
    <property type="entry name" value="Semialdehyde_DH_NAD-bd"/>
</dbReference>
<dbReference type="NCBIfam" id="TIGR03215">
    <property type="entry name" value="ac_ald_DH_ac"/>
    <property type="match status" value="1"/>
</dbReference>
<dbReference type="NCBIfam" id="NF006157">
    <property type="entry name" value="PRK08300.1"/>
    <property type="match status" value="1"/>
</dbReference>
<dbReference type="Pfam" id="PF09290">
    <property type="entry name" value="AcetDehyd-dimer"/>
    <property type="match status" value="1"/>
</dbReference>
<dbReference type="PIRSF" id="PIRSF015689">
    <property type="entry name" value="Actaldh_dh_actl"/>
    <property type="match status" value="1"/>
</dbReference>
<dbReference type="SMART" id="SM00859">
    <property type="entry name" value="Semialdhyde_dh"/>
    <property type="match status" value="1"/>
</dbReference>
<dbReference type="SUPFAM" id="SSF55347">
    <property type="entry name" value="Glyceraldehyde-3-phosphate dehydrogenase-like, C-terminal domain"/>
    <property type="match status" value="1"/>
</dbReference>
<dbReference type="SUPFAM" id="SSF51735">
    <property type="entry name" value="NAD(P)-binding Rossmann-fold domains"/>
    <property type="match status" value="1"/>
</dbReference>
<proteinExistence type="inferred from homology"/>